<reference key="1">
    <citation type="journal article" date="2005" name="J. Bacteriol.">
        <title>Whole-genome sequencing of Staphylococcus haemolyticus uncovers the extreme plasticity of its genome and the evolution of human-colonizing staphylococcal species.</title>
        <authorList>
            <person name="Takeuchi F."/>
            <person name="Watanabe S."/>
            <person name="Baba T."/>
            <person name="Yuzawa H."/>
            <person name="Ito T."/>
            <person name="Morimoto Y."/>
            <person name="Kuroda M."/>
            <person name="Cui L."/>
            <person name="Takahashi M."/>
            <person name="Ankai A."/>
            <person name="Baba S."/>
            <person name="Fukui S."/>
            <person name="Lee J.C."/>
            <person name="Hiramatsu K."/>
        </authorList>
    </citation>
    <scope>NUCLEOTIDE SEQUENCE [LARGE SCALE GENOMIC DNA]</scope>
    <source>
        <strain>JCSC1435</strain>
    </source>
</reference>
<proteinExistence type="inferred from homology"/>
<comment type="function">
    <text evidence="1">One of the early assembly proteins it binds 23S rRNA. One of the proteins that surrounds the polypeptide exit tunnel on the outside of the ribosome. Forms the main docking site for trigger factor binding to the ribosome.</text>
</comment>
<comment type="subunit">
    <text evidence="1">Part of the 50S ribosomal subunit. Contacts protein L29, and trigger factor when it is bound to the ribosome.</text>
</comment>
<comment type="similarity">
    <text evidence="1">Belongs to the universal ribosomal protein uL23 family.</text>
</comment>
<keyword id="KW-0687">Ribonucleoprotein</keyword>
<keyword id="KW-0689">Ribosomal protein</keyword>
<keyword id="KW-0694">RNA-binding</keyword>
<keyword id="KW-0699">rRNA-binding</keyword>
<evidence type="ECO:0000255" key="1">
    <source>
        <dbReference type="HAMAP-Rule" id="MF_01369"/>
    </source>
</evidence>
<evidence type="ECO:0000305" key="2"/>
<organism>
    <name type="scientific">Staphylococcus haemolyticus (strain JCSC1435)</name>
    <dbReference type="NCBI Taxonomy" id="279808"/>
    <lineage>
        <taxon>Bacteria</taxon>
        <taxon>Bacillati</taxon>
        <taxon>Bacillota</taxon>
        <taxon>Bacilli</taxon>
        <taxon>Bacillales</taxon>
        <taxon>Staphylococcaceae</taxon>
        <taxon>Staphylococcus</taxon>
    </lineage>
</organism>
<accession>Q4L8B2</accession>
<dbReference type="EMBL" id="AP006716">
    <property type="protein sequence ID" value="BAE04113.1"/>
    <property type="molecule type" value="Genomic_DNA"/>
</dbReference>
<dbReference type="RefSeq" id="WP_011275127.1">
    <property type="nucleotide sequence ID" value="NC_007168.1"/>
</dbReference>
<dbReference type="SMR" id="Q4L8B2"/>
<dbReference type="GeneID" id="93780193"/>
<dbReference type="KEGG" id="sha:SH0804"/>
<dbReference type="eggNOG" id="COG0089">
    <property type="taxonomic scope" value="Bacteria"/>
</dbReference>
<dbReference type="HOGENOM" id="CLU_037562_3_2_9"/>
<dbReference type="OrthoDB" id="9793353at2"/>
<dbReference type="Proteomes" id="UP000000543">
    <property type="component" value="Chromosome"/>
</dbReference>
<dbReference type="GO" id="GO:1990904">
    <property type="term" value="C:ribonucleoprotein complex"/>
    <property type="evidence" value="ECO:0007669"/>
    <property type="project" value="UniProtKB-KW"/>
</dbReference>
<dbReference type="GO" id="GO:0005840">
    <property type="term" value="C:ribosome"/>
    <property type="evidence" value="ECO:0007669"/>
    <property type="project" value="UniProtKB-KW"/>
</dbReference>
<dbReference type="GO" id="GO:0019843">
    <property type="term" value="F:rRNA binding"/>
    <property type="evidence" value="ECO:0007669"/>
    <property type="project" value="UniProtKB-UniRule"/>
</dbReference>
<dbReference type="GO" id="GO:0003735">
    <property type="term" value="F:structural constituent of ribosome"/>
    <property type="evidence" value="ECO:0007669"/>
    <property type="project" value="InterPro"/>
</dbReference>
<dbReference type="GO" id="GO:0006412">
    <property type="term" value="P:translation"/>
    <property type="evidence" value="ECO:0007669"/>
    <property type="project" value="UniProtKB-UniRule"/>
</dbReference>
<dbReference type="FunFam" id="3.30.70.330:FF:000001">
    <property type="entry name" value="50S ribosomal protein L23"/>
    <property type="match status" value="1"/>
</dbReference>
<dbReference type="Gene3D" id="3.30.70.330">
    <property type="match status" value="1"/>
</dbReference>
<dbReference type="HAMAP" id="MF_01369_B">
    <property type="entry name" value="Ribosomal_uL23_B"/>
    <property type="match status" value="1"/>
</dbReference>
<dbReference type="InterPro" id="IPR012677">
    <property type="entry name" value="Nucleotide-bd_a/b_plait_sf"/>
</dbReference>
<dbReference type="InterPro" id="IPR013025">
    <property type="entry name" value="Ribosomal_uL23-like"/>
</dbReference>
<dbReference type="InterPro" id="IPR012678">
    <property type="entry name" value="Ribosomal_uL23/eL15/eS24_sf"/>
</dbReference>
<dbReference type="NCBIfam" id="NF004363">
    <property type="entry name" value="PRK05738.2-4"/>
    <property type="match status" value="1"/>
</dbReference>
<dbReference type="PANTHER" id="PTHR11620">
    <property type="entry name" value="60S RIBOSOMAL PROTEIN L23A"/>
    <property type="match status" value="1"/>
</dbReference>
<dbReference type="Pfam" id="PF00276">
    <property type="entry name" value="Ribosomal_L23"/>
    <property type="match status" value="1"/>
</dbReference>
<dbReference type="SUPFAM" id="SSF54189">
    <property type="entry name" value="Ribosomal proteins S24e, L23 and L15e"/>
    <property type="match status" value="1"/>
</dbReference>
<sequence>MEARDVLKRPVITEKSSEAMAEDKYTFDVDTRANKTQVKIAVEEIFDVKVANVNIINYKPKKKRMGRYQGYTNKRRKAIVTLKEGSIDLFN</sequence>
<gene>
    <name evidence="1" type="primary">rplW</name>
    <name type="ordered locus">SH0804</name>
</gene>
<protein>
    <recommendedName>
        <fullName evidence="1">Large ribosomal subunit protein uL23</fullName>
    </recommendedName>
    <alternativeName>
        <fullName evidence="2">50S ribosomal protein L23</fullName>
    </alternativeName>
</protein>
<feature type="chain" id="PRO_0000224178" description="Large ribosomal subunit protein uL23">
    <location>
        <begin position="1"/>
        <end position="91"/>
    </location>
</feature>
<name>RL23_STAHJ</name>